<protein>
    <recommendedName>
        <fullName>ATP-dependent RNA helicase DBP2</fullName>
        <ecNumber>3.6.4.13</ecNumber>
    </recommendedName>
</protein>
<organism>
    <name type="scientific">Encephalitozoon cuniculi (strain GB-M1)</name>
    <name type="common">Microsporidian parasite</name>
    <dbReference type="NCBI Taxonomy" id="284813"/>
    <lineage>
        <taxon>Eukaryota</taxon>
        <taxon>Fungi</taxon>
        <taxon>Fungi incertae sedis</taxon>
        <taxon>Microsporidia</taxon>
        <taxon>Unikaryonidae</taxon>
        <taxon>Encephalitozoon</taxon>
    </lineage>
</organism>
<reference key="1">
    <citation type="journal article" date="2001" name="Nature">
        <title>Genome sequence and gene compaction of the eukaryote parasite Encephalitozoon cuniculi.</title>
        <authorList>
            <person name="Katinka M.D."/>
            <person name="Duprat S."/>
            <person name="Cornillot E."/>
            <person name="Metenier G."/>
            <person name="Thomarat F."/>
            <person name="Prensier G."/>
            <person name="Barbe V."/>
            <person name="Peyretaillade E."/>
            <person name="Brottier P."/>
            <person name="Wincker P."/>
            <person name="Delbac F."/>
            <person name="El Alaoui H."/>
            <person name="Peyret P."/>
            <person name="Saurin W."/>
            <person name="Gouy M."/>
            <person name="Weissenbach J."/>
            <person name="Vivares C.P."/>
        </authorList>
    </citation>
    <scope>NUCLEOTIDE SEQUENCE [LARGE SCALE GENOMIC DNA]</scope>
    <source>
        <strain>GB-M1</strain>
    </source>
</reference>
<keyword id="KW-0067">ATP-binding</keyword>
<keyword id="KW-0963">Cytoplasm</keyword>
<keyword id="KW-0347">Helicase</keyword>
<keyword id="KW-0378">Hydrolase</keyword>
<keyword id="KW-0866">Nonsense-mediated mRNA decay</keyword>
<keyword id="KW-0547">Nucleotide-binding</keyword>
<keyword id="KW-0539">Nucleus</keyword>
<keyword id="KW-1185">Reference proteome</keyword>
<keyword id="KW-0690">Ribosome biogenesis</keyword>
<keyword id="KW-0694">RNA-binding</keyword>
<keyword id="KW-0698">rRNA processing</keyword>
<dbReference type="EC" id="3.6.4.13"/>
<dbReference type="EMBL" id="AL590448">
    <property type="protein sequence ID" value="CAD26414.1"/>
    <property type="molecule type" value="Genomic_DNA"/>
</dbReference>
<dbReference type="RefSeq" id="NP_597238.1">
    <property type="nucleotide sequence ID" value="NM_001041847.1"/>
</dbReference>
<dbReference type="SMR" id="Q8SRB2"/>
<dbReference type="FunCoup" id="Q8SRB2">
    <property type="interactions" value="321"/>
</dbReference>
<dbReference type="STRING" id="284813.Q8SRB2"/>
<dbReference type="GeneID" id="859660"/>
<dbReference type="KEGG" id="ecu:ECU08_1080"/>
<dbReference type="VEuPathDB" id="MicrosporidiaDB:ECU08_1080"/>
<dbReference type="HOGENOM" id="CLU_003041_1_5_1"/>
<dbReference type="InParanoid" id="Q8SRB2"/>
<dbReference type="OMA" id="STMPKFE"/>
<dbReference type="OrthoDB" id="196131at2759"/>
<dbReference type="Proteomes" id="UP000000819">
    <property type="component" value="Chromosome VIII"/>
</dbReference>
<dbReference type="GO" id="GO:0005737">
    <property type="term" value="C:cytoplasm"/>
    <property type="evidence" value="ECO:0007669"/>
    <property type="project" value="UniProtKB-SubCell"/>
</dbReference>
<dbReference type="GO" id="GO:0005634">
    <property type="term" value="C:nucleus"/>
    <property type="evidence" value="ECO:0007669"/>
    <property type="project" value="UniProtKB-SubCell"/>
</dbReference>
<dbReference type="GO" id="GO:0005524">
    <property type="term" value="F:ATP binding"/>
    <property type="evidence" value="ECO:0007669"/>
    <property type="project" value="UniProtKB-KW"/>
</dbReference>
<dbReference type="GO" id="GO:0016887">
    <property type="term" value="F:ATP hydrolysis activity"/>
    <property type="evidence" value="ECO:0007669"/>
    <property type="project" value="RHEA"/>
</dbReference>
<dbReference type="GO" id="GO:0003723">
    <property type="term" value="F:RNA binding"/>
    <property type="evidence" value="ECO:0007669"/>
    <property type="project" value="UniProtKB-KW"/>
</dbReference>
<dbReference type="GO" id="GO:0003724">
    <property type="term" value="F:RNA helicase activity"/>
    <property type="evidence" value="ECO:0007669"/>
    <property type="project" value="UniProtKB-EC"/>
</dbReference>
<dbReference type="GO" id="GO:0000184">
    <property type="term" value="P:nuclear-transcribed mRNA catabolic process, nonsense-mediated decay"/>
    <property type="evidence" value="ECO:0007669"/>
    <property type="project" value="UniProtKB-KW"/>
</dbReference>
<dbReference type="GO" id="GO:0006364">
    <property type="term" value="P:rRNA processing"/>
    <property type="evidence" value="ECO:0007669"/>
    <property type="project" value="UniProtKB-KW"/>
</dbReference>
<dbReference type="CDD" id="cd17966">
    <property type="entry name" value="DEADc_DDX5_DDX17"/>
    <property type="match status" value="1"/>
</dbReference>
<dbReference type="CDD" id="cd18787">
    <property type="entry name" value="SF2_C_DEAD"/>
    <property type="match status" value="1"/>
</dbReference>
<dbReference type="FunFam" id="3.40.50.300:FF:000008">
    <property type="entry name" value="ATP-dependent RNA helicase RhlB"/>
    <property type="match status" value="1"/>
</dbReference>
<dbReference type="FunFam" id="3.40.50.300:FF:000079">
    <property type="entry name" value="probable ATP-dependent RNA helicase DDX17"/>
    <property type="match status" value="1"/>
</dbReference>
<dbReference type="Gene3D" id="3.40.50.300">
    <property type="entry name" value="P-loop containing nucleotide triphosphate hydrolases"/>
    <property type="match status" value="2"/>
</dbReference>
<dbReference type="InterPro" id="IPR011545">
    <property type="entry name" value="DEAD/DEAH_box_helicase_dom"/>
</dbReference>
<dbReference type="InterPro" id="IPR014001">
    <property type="entry name" value="Helicase_ATP-bd"/>
</dbReference>
<dbReference type="InterPro" id="IPR001650">
    <property type="entry name" value="Helicase_C-like"/>
</dbReference>
<dbReference type="InterPro" id="IPR027417">
    <property type="entry name" value="P-loop_NTPase"/>
</dbReference>
<dbReference type="InterPro" id="IPR000629">
    <property type="entry name" value="RNA-helicase_DEAD-box_CS"/>
</dbReference>
<dbReference type="InterPro" id="IPR014014">
    <property type="entry name" value="RNA_helicase_DEAD_Q_motif"/>
</dbReference>
<dbReference type="PANTHER" id="PTHR47958">
    <property type="entry name" value="ATP-DEPENDENT RNA HELICASE DBP3"/>
    <property type="match status" value="1"/>
</dbReference>
<dbReference type="Pfam" id="PF00270">
    <property type="entry name" value="DEAD"/>
    <property type="match status" value="1"/>
</dbReference>
<dbReference type="Pfam" id="PF00271">
    <property type="entry name" value="Helicase_C"/>
    <property type="match status" value="1"/>
</dbReference>
<dbReference type="SMART" id="SM00487">
    <property type="entry name" value="DEXDc"/>
    <property type="match status" value="1"/>
</dbReference>
<dbReference type="SMART" id="SM00490">
    <property type="entry name" value="HELICc"/>
    <property type="match status" value="1"/>
</dbReference>
<dbReference type="SUPFAM" id="SSF52540">
    <property type="entry name" value="P-loop containing nucleoside triphosphate hydrolases"/>
    <property type="match status" value="1"/>
</dbReference>
<dbReference type="PROSITE" id="PS00039">
    <property type="entry name" value="DEAD_ATP_HELICASE"/>
    <property type="match status" value="1"/>
</dbReference>
<dbReference type="PROSITE" id="PS51192">
    <property type="entry name" value="HELICASE_ATP_BIND_1"/>
    <property type="match status" value="1"/>
</dbReference>
<dbReference type="PROSITE" id="PS51194">
    <property type="entry name" value="HELICASE_CTER"/>
    <property type="match status" value="1"/>
</dbReference>
<dbReference type="PROSITE" id="PS51195">
    <property type="entry name" value="Q_MOTIF"/>
    <property type="match status" value="1"/>
</dbReference>
<proteinExistence type="inferred from homology"/>
<gene>
    <name type="primary">DBP2</name>
    <name type="ordered locus">ECU08_1080</name>
</gene>
<name>DBP2_ENCCU</name>
<sequence>MMHRGYGGDRRGFRPSFRSDRNSRYAPRTRREPQRYDPMPELAPVEFQKNFYQEAESISRMTPSEVSSFRKTNEMIVKGTNVPHPIQKFEEAGFSSEVVSSLVEKGFSEPTAIQGQGWPMALSGRDMVGIAQTGSGKTLSFILPALVHAKDQQPLRRGDGPIVLVLAPTRELVMQIKKVVDEFCGMFNLRSTAVYGGASSQPQIRALHEGAEVVIATPGRLIDLHDQGHAPLSRVTFLVLDEADRMLDMGFEPQLRKIIPKTNANRQTLMWSATWPREVRGLAESYMNEYIQVVVGNEELKTNSKIKQIVEVCSGREKEDKLIGVLDNFKGDKVIVFCNMKRTCDDLEYVLNRSGYGAAALHGDKSQNIRDKVLDDFRSGRRPILIATEVAGRGLDVNDVKLVINFDFPGSCEDYVHRIGRTARGNTKEGISHTFFTVGDKANARELIRMLREANQTVPSDLEDMVRVSNDRYGSRSTRHGYDYRGRAGRFPYRG</sequence>
<evidence type="ECO:0000250" key="1"/>
<evidence type="ECO:0000255" key="2">
    <source>
        <dbReference type="PROSITE-ProRule" id="PRU00541"/>
    </source>
</evidence>
<evidence type="ECO:0000255" key="3">
    <source>
        <dbReference type="PROSITE-ProRule" id="PRU00542"/>
    </source>
</evidence>
<evidence type="ECO:0000256" key="4">
    <source>
        <dbReference type="SAM" id="MobiDB-lite"/>
    </source>
</evidence>
<evidence type="ECO:0000305" key="5"/>
<accession>Q8SRB2</accession>
<feature type="chain" id="PRO_0000255989" description="ATP-dependent RNA helicase DBP2">
    <location>
        <begin position="1"/>
        <end position="495"/>
    </location>
</feature>
<feature type="domain" description="Helicase ATP-binding" evidence="2">
    <location>
        <begin position="118"/>
        <end position="293"/>
    </location>
</feature>
<feature type="domain" description="Helicase C-terminal" evidence="3">
    <location>
        <begin position="305"/>
        <end position="466"/>
    </location>
</feature>
<feature type="region of interest" description="Disordered" evidence="4">
    <location>
        <begin position="1"/>
        <end position="38"/>
    </location>
</feature>
<feature type="short sequence motif" description="Q motif">
    <location>
        <begin position="87"/>
        <end position="115"/>
    </location>
</feature>
<feature type="short sequence motif" description="DEAD box">
    <location>
        <begin position="241"/>
        <end position="244"/>
    </location>
</feature>
<feature type="compositionally biased region" description="Basic and acidic residues" evidence="4">
    <location>
        <begin position="1"/>
        <end position="35"/>
    </location>
</feature>
<feature type="binding site" evidence="2">
    <location>
        <begin position="131"/>
        <end position="138"/>
    </location>
    <ligand>
        <name>ATP</name>
        <dbReference type="ChEBI" id="CHEBI:30616"/>
    </ligand>
</feature>
<comment type="function">
    <text evidence="1">ATP-dependent RNA helicase involved nonsense-mediated mRNA decay and ribosome biogenesis through rRNA processing.</text>
</comment>
<comment type="catalytic activity">
    <reaction>
        <text>ATP + H2O = ADP + phosphate + H(+)</text>
        <dbReference type="Rhea" id="RHEA:13065"/>
        <dbReference type="ChEBI" id="CHEBI:15377"/>
        <dbReference type="ChEBI" id="CHEBI:15378"/>
        <dbReference type="ChEBI" id="CHEBI:30616"/>
        <dbReference type="ChEBI" id="CHEBI:43474"/>
        <dbReference type="ChEBI" id="CHEBI:456216"/>
        <dbReference type="EC" id="3.6.4.13"/>
    </reaction>
</comment>
<comment type="subunit">
    <text evidence="1">Associates with polysomes.</text>
</comment>
<comment type="subcellular location">
    <subcellularLocation>
        <location evidence="1">Cytoplasm</location>
    </subcellularLocation>
    <subcellularLocation>
        <location evidence="1">Nucleus</location>
    </subcellularLocation>
</comment>
<comment type="domain">
    <text>The Q motif is unique to and characteristic of the DEAD box family of RNA helicases and controls ATP binding and hydrolysis.</text>
</comment>
<comment type="similarity">
    <text evidence="5">Belongs to the DEAD box helicase family. DDX5/DBP2 subfamily.</text>
</comment>